<accession>Q0VPJ1</accession>
<keyword id="KW-0067">ATP-binding</keyword>
<keyword id="KW-0963">Cytoplasm</keyword>
<keyword id="KW-0275">Fatty acid biosynthesis</keyword>
<keyword id="KW-0276">Fatty acid metabolism</keyword>
<keyword id="KW-0444">Lipid biosynthesis</keyword>
<keyword id="KW-0443">Lipid metabolism</keyword>
<keyword id="KW-0479">Metal-binding</keyword>
<keyword id="KW-0547">Nucleotide-binding</keyword>
<keyword id="KW-1185">Reference proteome</keyword>
<keyword id="KW-0808">Transferase</keyword>
<keyword id="KW-0862">Zinc</keyword>
<keyword id="KW-0863">Zinc-finger</keyword>
<reference key="1">
    <citation type="journal article" date="2006" name="Nat. Biotechnol.">
        <title>Genome sequence of the ubiquitous hydrocarbon-degrading marine bacterium Alcanivorax borkumensis.</title>
        <authorList>
            <person name="Schneiker S."/>
            <person name="Martins dos Santos V.A.P."/>
            <person name="Bartels D."/>
            <person name="Bekel T."/>
            <person name="Brecht M."/>
            <person name="Buhrmester J."/>
            <person name="Chernikova T.N."/>
            <person name="Denaro R."/>
            <person name="Ferrer M."/>
            <person name="Gertler C."/>
            <person name="Goesmann A."/>
            <person name="Golyshina O.V."/>
            <person name="Kaminski F."/>
            <person name="Khachane A.N."/>
            <person name="Lang S."/>
            <person name="Linke B."/>
            <person name="McHardy A.C."/>
            <person name="Meyer F."/>
            <person name="Nechitaylo T."/>
            <person name="Puehler A."/>
            <person name="Regenhardt D."/>
            <person name="Rupp O."/>
            <person name="Sabirova J.S."/>
            <person name="Selbitschka W."/>
            <person name="Yakimov M.M."/>
            <person name="Timmis K.N."/>
            <person name="Vorhoelter F.-J."/>
            <person name="Weidner S."/>
            <person name="Kaiser O."/>
            <person name="Golyshin P.N."/>
        </authorList>
    </citation>
    <scope>NUCLEOTIDE SEQUENCE [LARGE SCALE GENOMIC DNA]</scope>
    <source>
        <strain>ATCC 700651 / DSM 11573 / NCIMB 13689 / SK2</strain>
    </source>
</reference>
<protein>
    <recommendedName>
        <fullName evidence="1">Acetyl-coenzyme A carboxylase carboxyl transferase subunit beta</fullName>
        <shortName evidence="1">ACCase subunit beta</shortName>
        <shortName evidence="1">Acetyl-CoA carboxylase carboxyltransferase subunit beta</shortName>
        <ecNumber evidence="1">2.1.3.15</ecNumber>
    </recommendedName>
</protein>
<feature type="chain" id="PRO_0000358950" description="Acetyl-coenzyme A carboxylase carboxyl transferase subunit beta">
    <location>
        <begin position="1"/>
        <end position="293"/>
    </location>
</feature>
<feature type="domain" description="CoA carboxyltransferase N-terminal" evidence="2">
    <location>
        <begin position="29"/>
        <end position="293"/>
    </location>
</feature>
<feature type="zinc finger region" description="C4-type" evidence="1">
    <location>
        <begin position="33"/>
        <end position="55"/>
    </location>
</feature>
<feature type="binding site" evidence="1">
    <location>
        <position position="33"/>
    </location>
    <ligand>
        <name>Zn(2+)</name>
        <dbReference type="ChEBI" id="CHEBI:29105"/>
    </ligand>
</feature>
<feature type="binding site" evidence="1">
    <location>
        <position position="36"/>
    </location>
    <ligand>
        <name>Zn(2+)</name>
        <dbReference type="ChEBI" id="CHEBI:29105"/>
    </ligand>
</feature>
<feature type="binding site" evidence="1">
    <location>
        <position position="52"/>
    </location>
    <ligand>
        <name>Zn(2+)</name>
        <dbReference type="ChEBI" id="CHEBI:29105"/>
    </ligand>
</feature>
<feature type="binding site" evidence="1">
    <location>
        <position position="55"/>
    </location>
    <ligand>
        <name>Zn(2+)</name>
        <dbReference type="ChEBI" id="CHEBI:29105"/>
    </ligand>
</feature>
<name>ACCD_ALCBS</name>
<proteinExistence type="inferred from homology"/>
<comment type="function">
    <text evidence="1">Component of the acetyl coenzyme A carboxylase (ACC) complex. Biotin carboxylase (BC) catalyzes the carboxylation of biotin on its carrier protein (BCCP) and then the CO(2) group is transferred by the transcarboxylase to acetyl-CoA to form malonyl-CoA.</text>
</comment>
<comment type="catalytic activity">
    <reaction evidence="1">
        <text>N(6)-carboxybiotinyl-L-lysyl-[protein] + acetyl-CoA = N(6)-biotinyl-L-lysyl-[protein] + malonyl-CoA</text>
        <dbReference type="Rhea" id="RHEA:54728"/>
        <dbReference type="Rhea" id="RHEA-COMP:10505"/>
        <dbReference type="Rhea" id="RHEA-COMP:10506"/>
        <dbReference type="ChEBI" id="CHEBI:57288"/>
        <dbReference type="ChEBI" id="CHEBI:57384"/>
        <dbReference type="ChEBI" id="CHEBI:83144"/>
        <dbReference type="ChEBI" id="CHEBI:83145"/>
        <dbReference type="EC" id="2.1.3.15"/>
    </reaction>
</comment>
<comment type="cofactor">
    <cofactor evidence="1">
        <name>Zn(2+)</name>
        <dbReference type="ChEBI" id="CHEBI:29105"/>
    </cofactor>
    <text evidence="1">Binds 1 zinc ion per subunit.</text>
</comment>
<comment type="pathway">
    <text evidence="1">Lipid metabolism; malonyl-CoA biosynthesis; malonyl-CoA from acetyl-CoA: step 1/1.</text>
</comment>
<comment type="subunit">
    <text evidence="1">Acetyl-CoA carboxylase is a heterohexamer composed of biotin carboxyl carrier protein (AccB), biotin carboxylase (AccC) and two subunits each of ACCase subunit alpha (AccA) and ACCase subunit beta (AccD).</text>
</comment>
<comment type="subcellular location">
    <subcellularLocation>
        <location evidence="1">Cytoplasm</location>
    </subcellularLocation>
</comment>
<comment type="similarity">
    <text evidence="1">Belongs to the AccD/PCCB family.</text>
</comment>
<gene>
    <name evidence="1" type="primary">accD</name>
    <name type="ordered locus">ABO_1459</name>
</gene>
<organism>
    <name type="scientific">Alcanivorax borkumensis (strain ATCC 700651 / DSM 11573 / NCIMB 13689 / SK2)</name>
    <dbReference type="NCBI Taxonomy" id="393595"/>
    <lineage>
        <taxon>Bacteria</taxon>
        <taxon>Pseudomonadati</taxon>
        <taxon>Pseudomonadota</taxon>
        <taxon>Gammaproteobacteria</taxon>
        <taxon>Oceanospirillales</taxon>
        <taxon>Alcanivoracaceae</taxon>
        <taxon>Alcanivorax</taxon>
    </lineage>
</organism>
<evidence type="ECO:0000255" key="1">
    <source>
        <dbReference type="HAMAP-Rule" id="MF_01395"/>
    </source>
</evidence>
<evidence type="ECO:0000255" key="2">
    <source>
        <dbReference type="PROSITE-ProRule" id="PRU01136"/>
    </source>
</evidence>
<sequence>MSNSNWLEKILPAVRRPQESRRNNIPEGLWRKCPRCEGVVYRPELDRNMDVCPKCDHHLRISARRRLKLFLDEGVQTEIGTELSPVDRLKFKDSKKYKDRLVAAQKATDEKDALVVLKGALHGEPLVACAFEFSFMGGSMGSVVGERFVRAVNVCLEQKLPLVCFAASGGARMQEALFSLMQMAKTSAALEKMRQAGLPFISVLTDPVYGGVSASLAMLGDVNVAEPNALIGFAGPRVIEQTVRQKLPEGFQRSEFLLEHGAIDMIVSRHDMRETLYRLLANMMGWPPLALDD</sequence>
<dbReference type="EC" id="2.1.3.15" evidence="1"/>
<dbReference type="EMBL" id="AM286690">
    <property type="protein sequence ID" value="CAL16907.1"/>
    <property type="molecule type" value="Genomic_DNA"/>
</dbReference>
<dbReference type="RefSeq" id="WP_011588740.1">
    <property type="nucleotide sequence ID" value="NC_008260.1"/>
</dbReference>
<dbReference type="SMR" id="Q0VPJ1"/>
<dbReference type="STRING" id="393595.ABO_1459"/>
<dbReference type="KEGG" id="abo:ABO_1459"/>
<dbReference type="eggNOG" id="COG0777">
    <property type="taxonomic scope" value="Bacteria"/>
</dbReference>
<dbReference type="HOGENOM" id="CLU_015486_1_0_6"/>
<dbReference type="OrthoDB" id="9772975at2"/>
<dbReference type="UniPathway" id="UPA00655">
    <property type="reaction ID" value="UER00711"/>
</dbReference>
<dbReference type="Proteomes" id="UP000008871">
    <property type="component" value="Chromosome"/>
</dbReference>
<dbReference type="GO" id="GO:0009329">
    <property type="term" value="C:acetate CoA-transferase complex"/>
    <property type="evidence" value="ECO:0007669"/>
    <property type="project" value="TreeGrafter"/>
</dbReference>
<dbReference type="GO" id="GO:0003989">
    <property type="term" value="F:acetyl-CoA carboxylase activity"/>
    <property type="evidence" value="ECO:0007669"/>
    <property type="project" value="InterPro"/>
</dbReference>
<dbReference type="GO" id="GO:0005524">
    <property type="term" value="F:ATP binding"/>
    <property type="evidence" value="ECO:0007669"/>
    <property type="project" value="UniProtKB-KW"/>
</dbReference>
<dbReference type="GO" id="GO:0016743">
    <property type="term" value="F:carboxyl- or carbamoyltransferase activity"/>
    <property type="evidence" value="ECO:0007669"/>
    <property type="project" value="UniProtKB-UniRule"/>
</dbReference>
<dbReference type="GO" id="GO:0008270">
    <property type="term" value="F:zinc ion binding"/>
    <property type="evidence" value="ECO:0007669"/>
    <property type="project" value="UniProtKB-UniRule"/>
</dbReference>
<dbReference type="GO" id="GO:0006633">
    <property type="term" value="P:fatty acid biosynthetic process"/>
    <property type="evidence" value="ECO:0007669"/>
    <property type="project" value="UniProtKB-KW"/>
</dbReference>
<dbReference type="GO" id="GO:2001295">
    <property type="term" value="P:malonyl-CoA biosynthetic process"/>
    <property type="evidence" value="ECO:0007669"/>
    <property type="project" value="UniProtKB-UniRule"/>
</dbReference>
<dbReference type="Gene3D" id="3.90.226.10">
    <property type="entry name" value="2-enoyl-CoA Hydratase, Chain A, domain 1"/>
    <property type="match status" value="1"/>
</dbReference>
<dbReference type="HAMAP" id="MF_01395">
    <property type="entry name" value="AcetylCoA_CT_beta"/>
    <property type="match status" value="1"/>
</dbReference>
<dbReference type="InterPro" id="IPR034733">
    <property type="entry name" value="AcCoA_carboxyl_beta"/>
</dbReference>
<dbReference type="InterPro" id="IPR000438">
    <property type="entry name" value="Acetyl_CoA_COase_Trfase_b_su"/>
</dbReference>
<dbReference type="InterPro" id="IPR029045">
    <property type="entry name" value="ClpP/crotonase-like_dom_sf"/>
</dbReference>
<dbReference type="InterPro" id="IPR011762">
    <property type="entry name" value="COA_CT_N"/>
</dbReference>
<dbReference type="InterPro" id="IPR041010">
    <property type="entry name" value="Znf-ACC"/>
</dbReference>
<dbReference type="NCBIfam" id="TIGR00515">
    <property type="entry name" value="accD"/>
    <property type="match status" value="1"/>
</dbReference>
<dbReference type="PANTHER" id="PTHR42995">
    <property type="entry name" value="ACETYL-COENZYME A CARBOXYLASE CARBOXYL TRANSFERASE SUBUNIT BETA, CHLOROPLASTIC"/>
    <property type="match status" value="1"/>
</dbReference>
<dbReference type="PANTHER" id="PTHR42995:SF5">
    <property type="entry name" value="ACETYL-COENZYME A CARBOXYLASE CARBOXYL TRANSFERASE SUBUNIT BETA, CHLOROPLASTIC"/>
    <property type="match status" value="1"/>
</dbReference>
<dbReference type="Pfam" id="PF01039">
    <property type="entry name" value="Carboxyl_trans"/>
    <property type="match status" value="1"/>
</dbReference>
<dbReference type="Pfam" id="PF17848">
    <property type="entry name" value="Zn_ribbon_ACC"/>
    <property type="match status" value="1"/>
</dbReference>
<dbReference type="PRINTS" id="PR01070">
    <property type="entry name" value="ACCCTRFRASEB"/>
</dbReference>
<dbReference type="SUPFAM" id="SSF52096">
    <property type="entry name" value="ClpP/crotonase"/>
    <property type="match status" value="1"/>
</dbReference>
<dbReference type="PROSITE" id="PS50980">
    <property type="entry name" value="COA_CT_NTER"/>
    <property type="match status" value="1"/>
</dbReference>